<comment type="function">
    <text>May be involved in transcriptional regulation.</text>
</comment>
<comment type="subcellular location">
    <subcellularLocation>
        <location evidence="4">Nucleus</location>
    </subcellularLocation>
</comment>
<comment type="similarity">
    <text evidence="6">Belongs to the krueppel C2H2-type zinc-finger protein family.</text>
</comment>
<keyword id="KW-0238">DNA-binding</keyword>
<keyword id="KW-1017">Isopeptide bond</keyword>
<keyword id="KW-0479">Metal-binding</keyword>
<keyword id="KW-0539">Nucleus</keyword>
<keyword id="KW-0597">Phosphoprotein</keyword>
<keyword id="KW-1185">Reference proteome</keyword>
<keyword id="KW-0677">Repeat</keyword>
<keyword id="KW-0804">Transcription</keyword>
<keyword id="KW-0805">Transcription regulation</keyword>
<keyword id="KW-0832">Ubl conjugation</keyword>
<keyword id="KW-0862">Zinc</keyword>
<keyword id="KW-0863">Zinc-finger</keyword>
<protein>
    <recommendedName>
        <fullName>Zinc finger protein 394</fullName>
    </recommendedName>
</protein>
<sequence>MNSSLTAQRRGSDAELGPWVMAARSKDAAPSQRDGLLPVKVEEDSLGSWEPSYPAASPDPETSRLHFRQLRYQEVAGPEEALSRLRELCRRWLRPELLSKEQILELLVLEQFLTILPEELQAWVREHCPESGEEAVAVVRALQRALDGTSSQGMVTFEDMAVSLTWEEWERLDPARSDFCRESAQKDSGSTVPPSLESRVENKELIPVQQILEEAEPQGRLQEAFQGKRPLFSKCVSTHEDRVEKQSGDPLPLKLENSPEAEGFNSISDVNKNGSIEGEDSKNNELQNSARCSNLVLCQHIPKAERPTDSEEHGNKCKQSFHMVTWHVLKPHKSDSGDSFHHSSLFETQRQLHEERPYKCGNCGKSFKQRSDLFRHQRIHTGEKPYGCQECGKSFSQSAALTKHQRTHTGEKPYTCLKCGERFRQNSHLNRHQSTHSRDKHFKCEECGETCHISNLFRHQRLHKGERPYKCEECEKSFKQRSDLFKHHRIHTGEKPYGCSVCGKRFNQSATLIKHQRIHTGEKPYKCLECGERFRQSTHLIRHQRIHQNKVLSAGRGGSRL</sequence>
<reference key="1">
    <citation type="submission" date="2006-08" db="EMBL/GenBank/DDBJ databases">
        <title>Positive selection in transcription factor genes on the human lineage.</title>
        <authorList>
            <person name="Nickel G.C."/>
            <person name="Tefft D.L."/>
            <person name="Trevarthen K."/>
            <person name="Funt J."/>
            <person name="Adams M.D."/>
        </authorList>
    </citation>
    <scope>NUCLEOTIDE SEQUENCE [GENOMIC DNA]</scope>
</reference>
<proteinExistence type="inferred from homology"/>
<name>ZN394_PANPA</name>
<accession>A1YG48</accession>
<dbReference type="EMBL" id="DQ977217">
    <property type="protein sequence ID" value="ABM54273.1"/>
    <property type="molecule type" value="Genomic_DNA"/>
</dbReference>
<dbReference type="RefSeq" id="XP_003815772.2">
    <property type="nucleotide sequence ID" value="XM_003815724.6"/>
</dbReference>
<dbReference type="SMR" id="A1YG48"/>
<dbReference type="STRING" id="9597.ENSPPAP00000027362"/>
<dbReference type="GeneID" id="100980634"/>
<dbReference type="KEGG" id="pps:100980634"/>
<dbReference type="CTD" id="84124"/>
<dbReference type="eggNOG" id="KOG1721">
    <property type="taxonomic scope" value="Eukaryota"/>
</dbReference>
<dbReference type="Proteomes" id="UP000240080">
    <property type="component" value="Unplaced"/>
</dbReference>
<dbReference type="GO" id="GO:0005634">
    <property type="term" value="C:nucleus"/>
    <property type="evidence" value="ECO:0007669"/>
    <property type="project" value="UniProtKB-SubCell"/>
</dbReference>
<dbReference type="GO" id="GO:0000981">
    <property type="term" value="F:DNA-binding transcription factor activity, RNA polymerase II-specific"/>
    <property type="evidence" value="ECO:0007669"/>
    <property type="project" value="TreeGrafter"/>
</dbReference>
<dbReference type="GO" id="GO:0000978">
    <property type="term" value="F:RNA polymerase II cis-regulatory region sequence-specific DNA binding"/>
    <property type="evidence" value="ECO:0007669"/>
    <property type="project" value="TreeGrafter"/>
</dbReference>
<dbReference type="GO" id="GO:0008270">
    <property type="term" value="F:zinc ion binding"/>
    <property type="evidence" value="ECO:0007669"/>
    <property type="project" value="UniProtKB-KW"/>
</dbReference>
<dbReference type="CDD" id="cd07765">
    <property type="entry name" value="KRAB_A-box"/>
    <property type="match status" value="1"/>
</dbReference>
<dbReference type="CDD" id="cd07936">
    <property type="entry name" value="SCAN"/>
    <property type="match status" value="1"/>
</dbReference>
<dbReference type="FunFam" id="3.30.160.60:FF:000250">
    <property type="entry name" value="zinc finger protein 197 isoform X1"/>
    <property type="match status" value="2"/>
</dbReference>
<dbReference type="FunFam" id="3.30.160.60:FF:000512">
    <property type="entry name" value="zinc finger protein 197 isoform X1"/>
    <property type="match status" value="1"/>
</dbReference>
<dbReference type="FunFam" id="1.10.4020.10:FF:000001">
    <property type="entry name" value="zinc finger protein 263 isoform X1"/>
    <property type="match status" value="1"/>
</dbReference>
<dbReference type="FunFam" id="3.30.160.60:FF:002343">
    <property type="entry name" value="Zinc finger protein 33A"/>
    <property type="match status" value="1"/>
</dbReference>
<dbReference type="FunFam" id="3.30.160.60:FF:001234">
    <property type="entry name" value="Zinc finger protein 394"/>
    <property type="match status" value="2"/>
</dbReference>
<dbReference type="Gene3D" id="6.10.140.140">
    <property type="match status" value="1"/>
</dbReference>
<dbReference type="Gene3D" id="3.30.160.60">
    <property type="entry name" value="Classic Zinc Finger"/>
    <property type="match status" value="7"/>
</dbReference>
<dbReference type="Gene3D" id="1.10.4020.10">
    <property type="entry name" value="DNA breaking-rejoining enzymes"/>
    <property type="match status" value="1"/>
</dbReference>
<dbReference type="InterPro" id="IPR001909">
    <property type="entry name" value="KRAB"/>
</dbReference>
<dbReference type="InterPro" id="IPR036051">
    <property type="entry name" value="KRAB_dom_sf"/>
</dbReference>
<dbReference type="InterPro" id="IPR003309">
    <property type="entry name" value="SCAN_dom"/>
</dbReference>
<dbReference type="InterPro" id="IPR038269">
    <property type="entry name" value="SCAN_sf"/>
</dbReference>
<dbReference type="InterPro" id="IPR036236">
    <property type="entry name" value="Znf_C2H2_sf"/>
</dbReference>
<dbReference type="InterPro" id="IPR013087">
    <property type="entry name" value="Znf_C2H2_type"/>
</dbReference>
<dbReference type="PANTHER" id="PTHR23235">
    <property type="entry name" value="KRUEPPEL-LIKE TRANSCRIPTION FACTOR"/>
    <property type="match status" value="1"/>
</dbReference>
<dbReference type="PANTHER" id="PTHR23235:SF142">
    <property type="entry name" value="ZINC FINGER PROTEIN 384"/>
    <property type="match status" value="1"/>
</dbReference>
<dbReference type="Pfam" id="PF01352">
    <property type="entry name" value="KRAB"/>
    <property type="match status" value="1"/>
</dbReference>
<dbReference type="Pfam" id="PF02023">
    <property type="entry name" value="SCAN"/>
    <property type="match status" value="1"/>
</dbReference>
<dbReference type="Pfam" id="PF00096">
    <property type="entry name" value="zf-C2H2"/>
    <property type="match status" value="6"/>
</dbReference>
<dbReference type="SMART" id="SM00349">
    <property type="entry name" value="KRAB"/>
    <property type="match status" value="1"/>
</dbReference>
<dbReference type="SMART" id="SM00431">
    <property type="entry name" value="SCAN"/>
    <property type="match status" value="1"/>
</dbReference>
<dbReference type="SMART" id="SM00355">
    <property type="entry name" value="ZnF_C2H2"/>
    <property type="match status" value="7"/>
</dbReference>
<dbReference type="SUPFAM" id="SSF57667">
    <property type="entry name" value="beta-beta-alpha zinc fingers"/>
    <property type="match status" value="4"/>
</dbReference>
<dbReference type="SUPFAM" id="SSF109640">
    <property type="entry name" value="KRAB domain (Kruppel-associated box)"/>
    <property type="match status" value="1"/>
</dbReference>
<dbReference type="SUPFAM" id="SSF47353">
    <property type="entry name" value="Retrovirus capsid dimerization domain-like"/>
    <property type="match status" value="1"/>
</dbReference>
<dbReference type="PROSITE" id="PS50805">
    <property type="entry name" value="KRAB"/>
    <property type="match status" value="1"/>
</dbReference>
<dbReference type="PROSITE" id="PS50804">
    <property type="entry name" value="SCAN_BOX"/>
    <property type="match status" value="1"/>
</dbReference>
<dbReference type="PROSITE" id="PS00028">
    <property type="entry name" value="ZINC_FINGER_C2H2_1"/>
    <property type="match status" value="6"/>
</dbReference>
<dbReference type="PROSITE" id="PS50157">
    <property type="entry name" value="ZINC_FINGER_C2H2_2"/>
    <property type="match status" value="7"/>
</dbReference>
<gene>
    <name type="primary">ZNF394</name>
</gene>
<organism>
    <name type="scientific">Pan paniscus</name>
    <name type="common">Pygmy chimpanzee</name>
    <name type="synonym">Bonobo</name>
    <dbReference type="NCBI Taxonomy" id="9597"/>
    <lineage>
        <taxon>Eukaryota</taxon>
        <taxon>Metazoa</taxon>
        <taxon>Chordata</taxon>
        <taxon>Craniata</taxon>
        <taxon>Vertebrata</taxon>
        <taxon>Euteleostomi</taxon>
        <taxon>Mammalia</taxon>
        <taxon>Eutheria</taxon>
        <taxon>Euarchontoglires</taxon>
        <taxon>Primates</taxon>
        <taxon>Haplorrhini</taxon>
        <taxon>Catarrhini</taxon>
        <taxon>Hominidae</taxon>
        <taxon>Pan</taxon>
    </lineage>
</organism>
<feature type="chain" id="PRO_0000285473" description="Zinc finger protein 394">
    <location>
        <begin position="1"/>
        <end position="561"/>
    </location>
</feature>
<feature type="domain" description="SCAN box" evidence="4">
    <location>
        <begin position="64"/>
        <end position="146"/>
    </location>
</feature>
<feature type="domain" description="KRAB" evidence="3">
    <location>
        <begin position="155"/>
        <end position="230"/>
    </location>
</feature>
<feature type="zinc finger region" description="C2H2-type 1" evidence="2">
    <location>
        <begin position="358"/>
        <end position="380"/>
    </location>
</feature>
<feature type="zinc finger region" description="C2H2-type 2" evidence="2">
    <location>
        <begin position="386"/>
        <end position="408"/>
    </location>
</feature>
<feature type="zinc finger region" description="C2H2-type 3" evidence="2">
    <location>
        <begin position="414"/>
        <end position="436"/>
    </location>
</feature>
<feature type="zinc finger region" description="C2H2-type 4" evidence="2">
    <location>
        <begin position="442"/>
        <end position="463"/>
    </location>
</feature>
<feature type="zinc finger region" description="C2H2-type 5" evidence="2">
    <location>
        <begin position="469"/>
        <end position="491"/>
    </location>
</feature>
<feature type="zinc finger region" description="C2H2-type 6" evidence="2">
    <location>
        <begin position="497"/>
        <end position="519"/>
    </location>
</feature>
<feature type="zinc finger region" description="C2H2-type 7" evidence="2">
    <location>
        <begin position="525"/>
        <end position="547"/>
    </location>
</feature>
<feature type="region of interest" description="Disordered" evidence="5">
    <location>
        <begin position="43"/>
        <end position="62"/>
    </location>
</feature>
<feature type="region of interest" description="Disordered" evidence="5">
    <location>
        <begin position="238"/>
        <end position="283"/>
    </location>
</feature>
<feature type="compositionally biased region" description="Basic and acidic residues" evidence="5">
    <location>
        <begin position="238"/>
        <end position="247"/>
    </location>
</feature>
<feature type="compositionally biased region" description="Polar residues" evidence="5">
    <location>
        <begin position="265"/>
        <end position="274"/>
    </location>
</feature>
<feature type="modified residue" description="Phosphoserine" evidence="1">
    <location>
        <position position="12"/>
    </location>
</feature>
<feature type="cross-link" description="Glycyl lysine isopeptide (Lys-Gly) (interchain with G-Cter in SUMO2)" evidence="1">
    <location>
        <position position="40"/>
    </location>
</feature>
<feature type="cross-link" description="Glycyl lysine isopeptide (Lys-Gly) (interchain with G-Cter in SUMO2)" evidence="1">
    <location>
        <position position="203"/>
    </location>
</feature>
<feature type="cross-link" description="Glycyl lysine isopeptide (Lys-Gly) (interchain with G-Cter in SUMO2)" evidence="1">
    <location>
        <position position="228"/>
    </location>
</feature>
<feature type="cross-link" description="Glycyl lysine isopeptide (Lys-Gly) (interchain with G-Cter in SUMO2)" evidence="1">
    <location>
        <position position="254"/>
    </location>
</feature>
<feature type="cross-link" description="Glycyl lysine isopeptide (Lys-Gly) (interchain with G-Cter in SUMO2)" evidence="1">
    <location>
        <position position="282"/>
    </location>
</feature>
<feature type="cross-link" description="Glycyl lysine isopeptide (Lys-Gly) (interchain with G-Cter in SUMO2)" evidence="1">
    <location>
        <position position="443"/>
    </location>
</feature>
<evidence type="ECO:0000250" key="1">
    <source>
        <dbReference type="UniProtKB" id="Q53GI3"/>
    </source>
</evidence>
<evidence type="ECO:0000255" key="2">
    <source>
        <dbReference type="PROSITE-ProRule" id="PRU00042"/>
    </source>
</evidence>
<evidence type="ECO:0000255" key="3">
    <source>
        <dbReference type="PROSITE-ProRule" id="PRU00119"/>
    </source>
</evidence>
<evidence type="ECO:0000255" key="4">
    <source>
        <dbReference type="PROSITE-ProRule" id="PRU00187"/>
    </source>
</evidence>
<evidence type="ECO:0000256" key="5">
    <source>
        <dbReference type="SAM" id="MobiDB-lite"/>
    </source>
</evidence>
<evidence type="ECO:0000305" key="6"/>